<proteinExistence type="evidence at protein level"/>
<feature type="chain" id="PRO_0000142503" description="Translation initiation factor 5A">
    <location>
        <begin position="1"/>
        <end position="131"/>
    </location>
</feature>
<feature type="modified residue" description="Hypusine" evidence="2">
    <location>
        <position position="36"/>
    </location>
</feature>
<feature type="sequence conflict" description="In Ref. 1; AA sequence." evidence="3" ref="1">
    <original>R</original>
    <variation>Y</variation>
    <location>
        <position position="129"/>
    </location>
</feature>
<gene>
    <name type="primary">eif5a</name>
    <name type="ordered locus">Saci_1311</name>
</gene>
<organism>
    <name type="scientific">Sulfolobus acidocaldarius (strain ATCC 33909 / DSM 639 / JCM 8929 / NBRC 15157 / NCIMB 11770)</name>
    <dbReference type="NCBI Taxonomy" id="330779"/>
    <lineage>
        <taxon>Archaea</taxon>
        <taxon>Thermoproteota</taxon>
        <taxon>Thermoprotei</taxon>
        <taxon>Sulfolobales</taxon>
        <taxon>Sulfolobaceae</taxon>
        <taxon>Sulfolobus</taxon>
    </lineage>
</organism>
<accession>P28461</accession>
<accession>Q4J981</accession>
<name>IF5A_SULAC</name>
<reference key="1">
    <citation type="journal article" date="1992" name="Eur. J. Biochem.">
        <title>The archaebacterial hypusine-containing protein. Structural features suggest common ancestry with eukaryotic translation initiation factor 5A.</title>
        <authorList>
            <person name="Bartig D."/>
            <person name="Lemkemeier K."/>
            <person name="Frank J."/>
            <person name="Lottspeich F."/>
            <person name="Klink F."/>
        </authorList>
    </citation>
    <scope>NUCLEOTIDE SEQUENCE [GENOMIC DNA]</scope>
    <scope>PARTIAL PROTEIN SEQUENCE</scope>
    <scope>HYPUSINE AT LYS-36</scope>
    <source>
        <strain>ATCC 33909 / DSM 639 / JCM 8929 / NBRC 15157 / NCIMB 11770</strain>
    </source>
</reference>
<reference key="2">
    <citation type="journal article" date="2005" name="J. Bacteriol.">
        <title>The genome of Sulfolobus acidocaldarius, a model organism of the Crenarchaeota.</title>
        <authorList>
            <person name="Chen L."/>
            <person name="Bruegger K."/>
            <person name="Skovgaard M."/>
            <person name="Redder P."/>
            <person name="She Q."/>
            <person name="Torarinsson E."/>
            <person name="Greve B."/>
            <person name="Awayez M."/>
            <person name="Zibat A."/>
            <person name="Klenk H.-P."/>
            <person name="Garrett R.A."/>
        </authorList>
    </citation>
    <scope>NUCLEOTIDE SEQUENCE [LARGE SCALE GENOMIC DNA]</scope>
    <source>
        <strain>ATCC 33909 / DSM 639 / JCM 8929 / NBRC 15157 / NCIMB 11770</strain>
    </source>
</reference>
<dbReference type="EMBL" id="X63132">
    <property type="protein sequence ID" value="CAA44842.1"/>
    <property type="status" value="ALT_INIT"/>
    <property type="molecule type" value="Genomic_DNA"/>
</dbReference>
<dbReference type="EMBL" id="CP000077">
    <property type="protein sequence ID" value="AAY80649.1"/>
    <property type="molecule type" value="Genomic_DNA"/>
</dbReference>
<dbReference type="PIR" id="S22380">
    <property type="entry name" value="S22380"/>
</dbReference>
<dbReference type="RefSeq" id="WP_011278151.1">
    <property type="nucleotide sequence ID" value="NC_007181.1"/>
</dbReference>
<dbReference type="SMR" id="P28461"/>
<dbReference type="STRING" id="330779.Saci_1311"/>
<dbReference type="GeneID" id="14551816"/>
<dbReference type="KEGG" id="sai:Saci_1311"/>
<dbReference type="PATRIC" id="fig|330779.12.peg.1265"/>
<dbReference type="eggNOG" id="arCOG04277">
    <property type="taxonomic scope" value="Archaea"/>
</dbReference>
<dbReference type="HOGENOM" id="CLU_102600_3_0_2"/>
<dbReference type="Proteomes" id="UP000001018">
    <property type="component" value="Chromosome"/>
</dbReference>
<dbReference type="GO" id="GO:0005737">
    <property type="term" value="C:cytoplasm"/>
    <property type="evidence" value="ECO:0007669"/>
    <property type="project" value="UniProtKB-SubCell"/>
</dbReference>
<dbReference type="GO" id="GO:0043022">
    <property type="term" value="F:ribosome binding"/>
    <property type="evidence" value="ECO:0007669"/>
    <property type="project" value="InterPro"/>
</dbReference>
<dbReference type="GO" id="GO:0003723">
    <property type="term" value="F:RNA binding"/>
    <property type="evidence" value="ECO:0007669"/>
    <property type="project" value="InterPro"/>
</dbReference>
<dbReference type="GO" id="GO:0003746">
    <property type="term" value="F:translation elongation factor activity"/>
    <property type="evidence" value="ECO:0007669"/>
    <property type="project" value="InterPro"/>
</dbReference>
<dbReference type="GO" id="GO:0003743">
    <property type="term" value="F:translation initiation factor activity"/>
    <property type="evidence" value="ECO:0007669"/>
    <property type="project" value="UniProtKB-UniRule"/>
</dbReference>
<dbReference type="GO" id="GO:0045901">
    <property type="term" value="P:positive regulation of translational elongation"/>
    <property type="evidence" value="ECO:0007669"/>
    <property type="project" value="InterPro"/>
</dbReference>
<dbReference type="GO" id="GO:0045905">
    <property type="term" value="P:positive regulation of translational termination"/>
    <property type="evidence" value="ECO:0007669"/>
    <property type="project" value="InterPro"/>
</dbReference>
<dbReference type="CDD" id="cd04467">
    <property type="entry name" value="S1_aIF5A"/>
    <property type="match status" value="1"/>
</dbReference>
<dbReference type="FunFam" id="2.30.30.30:FF:000038">
    <property type="entry name" value="Translation initiation factor 5A"/>
    <property type="match status" value="1"/>
</dbReference>
<dbReference type="FunFam" id="2.40.50.140:FF:000334">
    <property type="entry name" value="Translation initiation factor 5A"/>
    <property type="match status" value="1"/>
</dbReference>
<dbReference type="Gene3D" id="2.30.30.30">
    <property type="match status" value="1"/>
</dbReference>
<dbReference type="Gene3D" id="2.40.50.140">
    <property type="entry name" value="Nucleic acid-binding proteins"/>
    <property type="match status" value="1"/>
</dbReference>
<dbReference type="HAMAP" id="MF_00085">
    <property type="entry name" value="eIF_5A"/>
    <property type="match status" value="1"/>
</dbReference>
<dbReference type="InterPro" id="IPR001884">
    <property type="entry name" value="IF5A-like"/>
</dbReference>
<dbReference type="InterPro" id="IPR048670">
    <property type="entry name" value="IF5A-like_N"/>
</dbReference>
<dbReference type="InterPro" id="IPR012340">
    <property type="entry name" value="NA-bd_OB-fold"/>
</dbReference>
<dbReference type="InterPro" id="IPR014722">
    <property type="entry name" value="Rib_uL2_dom2"/>
</dbReference>
<dbReference type="InterPro" id="IPR019769">
    <property type="entry name" value="Trans_elong_IF5A_hypusine_site"/>
</dbReference>
<dbReference type="InterPro" id="IPR022847">
    <property type="entry name" value="Transl_elong_IF5A_arc"/>
</dbReference>
<dbReference type="InterPro" id="IPR020189">
    <property type="entry name" value="Transl_elong_IF5A_C"/>
</dbReference>
<dbReference type="InterPro" id="IPR008991">
    <property type="entry name" value="Translation_prot_SH3-like_sf"/>
</dbReference>
<dbReference type="NCBIfam" id="TIGR00037">
    <property type="entry name" value="eIF_5A"/>
    <property type="match status" value="1"/>
</dbReference>
<dbReference type="NCBIfam" id="NF003076">
    <property type="entry name" value="PRK03999.1"/>
    <property type="match status" value="1"/>
</dbReference>
<dbReference type="PANTHER" id="PTHR11673">
    <property type="entry name" value="TRANSLATION INITIATION FACTOR 5A FAMILY MEMBER"/>
    <property type="match status" value="1"/>
</dbReference>
<dbReference type="Pfam" id="PF01287">
    <property type="entry name" value="eIF-5a"/>
    <property type="match status" value="1"/>
</dbReference>
<dbReference type="Pfam" id="PF21485">
    <property type="entry name" value="IF5A-like_N"/>
    <property type="match status" value="1"/>
</dbReference>
<dbReference type="PIRSF" id="PIRSF003025">
    <property type="entry name" value="eIF5A"/>
    <property type="match status" value="1"/>
</dbReference>
<dbReference type="SMART" id="SM01376">
    <property type="entry name" value="eIF-5a"/>
    <property type="match status" value="1"/>
</dbReference>
<dbReference type="SUPFAM" id="SSF50249">
    <property type="entry name" value="Nucleic acid-binding proteins"/>
    <property type="match status" value="1"/>
</dbReference>
<dbReference type="SUPFAM" id="SSF50104">
    <property type="entry name" value="Translation proteins SH3-like domain"/>
    <property type="match status" value="1"/>
</dbReference>
<dbReference type="PROSITE" id="PS00302">
    <property type="entry name" value="IF5A_HYPUSINE"/>
    <property type="match status" value="1"/>
</dbReference>
<comment type="function">
    <text evidence="1">Functions by promoting the formation of the first peptide bond.</text>
</comment>
<comment type="subcellular location">
    <subcellularLocation>
        <location>Cytoplasm</location>
    </subcellularLocation>
</comment>
<comment type="PTM">
    <text>The N-terminus is blocked.</text>
</comment>
<comment type="similarity">
    <text evidence="3">Belongs to the eIF-5A family.</text>
</comment>
<comment type="sequence caution" evidence="3">
    <conflict type="erroneous initiation">
        <sequence resource="EMBL-CDS" id="CAA44842"/>
    </conflict>
</comment>
<evidence type="ECO:0000250" key="1"/>
<evidence type="ECO:0000269" key="2">
    <source>
    </source>
</evidence>
<evidence type="ECO:0000305" key="3"/>
<sequence length="131" mass="14535">MSIQYTTVGDLKVGSYVMIDGEPCRVVEITKAKTGKHGSAKANVVAIGLFTGQKRSLMAPVDQQVEVPIIEKHVGQILADKGDNLTIMDLESYETFDLEKPTENEIVSKIRPGAEIEYWSVMGRRKIVRVK</sequence>
<protein>
    <recommendedName>
        <fullName>Translation initiation factor 5A</fullName>
    </recommendedName>
    <alternativeName>
        <fullName>Hypusine-containing protein</fullName>
    </alternativeName>
    <alternativeName>
        <fullName>SHP</fullName>
    </alternativeName>
    <alternativeName>
        <fullName>eIF-5A</fullName>
    </alternativeName>
</protein>
<keyword id="KW-0963">Cytoplasm</keyword>
<keyword id="KW-0903">Direct protein sequencing</keyword>
<keyword id="KW-0385">Hypusine</keyword>
<keyword id="KW-0396">Initiation factor</keyword>
<keyword id="KW-0648">Protein biosynthesis</keyword>
<keyword id="KW-1185">Reference proteome</keyword>